<feature type="chain" id="PRO_0000376470" description="Probable cell division protein WhiA">
    <location>
        <begin position="1"/>
        <end position="318"/>
    </location>
</feature>
<feature type="DNA-binding region" description="H-T-H motif" evidence="1">
    <location>
        <begin position="281"/>
        <end position="314"/>
    </location>
</feature>
<proteinExistence type="inferred from homology"/>
<comment type="function">
    <text evidence="1">Involved in cell division and chromosome segregation.</text>
</comment>
<comment type="similarity">
    <text evidence="1">Belongs to the WhiA family.</text>
</comment>
<organism>
    <name type="scientific">Clostridium tetani (strain Massachusetts / E88)</name>
    <dbReference type="NCBI Taxonomy" id="212717"/>
    <lineage>
        <taxon>Bacteria</taxon>
        <taxon>Bacillati</taxon>
        <taxon>Bacillota</taxon>
        <taxon>Clostridia</taxon>
        <taxon>Eubacteriales</taxon>
        <taxon>Clostridiaceae</taxon>
        <taxon>Clostridium</taxon>
    </lineage>
</organism>
<evidence type="ECO:0000255" key="1">
    <source>
        <dbReference type="HAMAP-Rule" id="MF_01420"/>
    </source>
</evidence>
<gene>
    <name evidence="1" type="primary">whiA</name>
    <name type="ordered locus">CTC_02493</name>
</gene>
<protein>
    <recommendedName>
        <fullName evidence="1">Probable cell division protein WhiA</fullName>
    </recommendedName>
</protein>
<sequence length="318" mass="36123">MSFSSKVKNEVCRYDELEEKEAMALLSAIMRASGTLTFGRNKGIGFKIATENAAITRLVFKILKNILDIHTNIMIKKSNSFKKNNVYIIVINEEEGVKKLLEKTEVVKIEDIGFFINYNISENLVYDDNTKKAYIRGAFLGGGSVSNPEKTYHLEFVTNNEMYANKLSELINSYGLNSKVIQRKSNFIIYIKEGEQISDLLNIIGAHSSLLQLENIRIMKDMRNNINRIVNCETANLSKTVNAAVRQIESINLINKEIGLKRLPKNLRDMAEIRLKYPDVSLKELGEMLSPPVGKSGVNHRLRRIEKIAEELSKEGNF</sequence>
<keyword id="KW-0131">Cell cycle</keyword>
<keyword id="KW-0132">Cell division</keyword>
<keyword id="KW-0238">DNA-binding</keyword>
<keyword id="KW-1185">Reference proteome</keyword>
<name>WHIA_CLOTE</name>
<reference key="1">
    <citation type="journal article" date="2003" name="Proc. Natl. Acad. Sci. U.S.A.">
        <title>The genome sequence of Clostridium tetani, the causative agent of tetanus disease.</title>
        <authorList>
            <person name="Brueggemann H."/>
            <person name="Baeumer S."/>
            <person name="Fricke W.F."/>
            <person name="Wiezer A."/>
            <person name="Liesegang H."/>
            <person name="Decker I."/>
            <person name="Herzberg C."/>
            <person name="Martinez-Arias R."/>
            <person name="Merkl R."/>
            <person name="Henne A."/>
            <person name="Gottschalk G."/>
        </authorList>
    </citation>
    <scope>NUCLEOTIDE SEQUENCE [LARGE SCALE GENOMIC DNA]</scope>
    <source>
        <strain>Massachusetts / E88</strain>
    </source>
</reference>
<dbReference type="EMBL" id="AE015927">
    <property type="protein sequence ID" value="AAO36956.1"/>
    <property type="molecule type" value="Genomic_DNA"/>
</dbReference>
<dbReference type="RefSeq" id="WP_011100617.1">
    <property type="nucleotide sequence ID" value="NC_004557.1"/>
</dbReference>
<dbReference type="SMR" id="Q890Y9"/>
<dbReference type="STRING" id="212717.CTC_02493"/>
<dbReference type="GeneID" id="24254311"/>
<dbReference type="KEGG" id="ctc:CTC_02493"/>
<dbReference type="HOGENOM" id="CLU_053282_0_0_9"/>
<dbReference type="OrthoDB" id="401278at2"/>
<dbReference type="Proteomes" id="UP000001412">
    <property type="component" value="Chromosome"/>
</dbReference>
<dbReference type="GO" id="GO:0003677">
    <property type="term" value="F:DNA binding"/>
    <property type="evidence" value="ECO:0007669"/>
    <property type="project" value="UniProtKB-UniRule"/>
</dbReference>
<dbReference type="GO" id="GO:0004519">
    <property type="term" value="F:endonuclease activity"/>
    <property type="evidence" value="ECO:0007669"/>
    <property type="project" value="InterPro"/>
</dbReference>
<dbReference type="GO" id="GO:0051301">
    <property type="term" value="P:cell division"/>
    <property type="evidence" value="ECO:0007669"/>
    <property type="project" value="UniProtKB-UniRule"/>
</dbReference>
<dbReference type="GO" id="GO:0043937">
    <property type="term" value="P:regulation of sporulation"/>
    <property type="evidence" value="ECO:0007669"/>
    <property type="project" value="InterPro"/>
</dbReference>
<dbReference type="Gene3D" id="3.10.28.10">
    <property type="entry name" value="Homing endonucleases"/>
    <property type="match status" value="1"/>
</dbReference>
<dbReference type="HAMAP" id="MF_01420">
    <property type="entry name" value="HTH_type_WhiA"/>
    <property type="match status" value="1"/>
</dbReference>
<dbReference type="InterPro" id="IPR027434">
    <property type="entry name" value="Homing_endonucl"/>
</dbReference>
<dbReference type="InterPro" id="IPR004042">
    <property type="entry name" value="Intein_endonuc_central"/>
</dbReference>
<dbReference type="InterPro" id="IPR018478">
    <property type="entry name" value="Sporu_reg_WhiA_N_dom"/>
</dbReference>
<dbReference type="InterPro" id="IPR003802">
    <property type="entry name" value="Sporulation_regulator_WhiA"/>
</dbReference>
<dbReference type="InterPro" id="IPR023054">
    <property type="entry name" value="Sporulation_regulator_WhiA_C"/>
</dbReference>
<dbReference type="InterPro" id="IPR039518">
    <property type="entry name" value="WhiA_LAGLIDADG_dom"/>
</dbReference>
<dbReference type="NCBIfam" id="TIGR00647">
    <property type="entry name" value="DNA_bind_WhiA"/>
    <property type="match status" value="1"/>
</dbReference>
<dbReference type="PANTHER" id="PTHR37307">
    <property type="entry name" value="CELL DIVISION PROTEIN WHIA-RELATED"/>
    <property type="match status" value="1"/>
</dbReference>
<dbReference type="PANTHER" id="PTHR37307:SF1">
    <property type="entry name" value="CELL DIVISION PROTEIN WHIA-RELATED"/>
    <property type="match status" value="1"/>
</dbReference>
<dbReference type="Pfam" id="PF02650">
    <property type="entry name" value="HTH_WhiA"/>
    <property type="match status" value="1"/>
</dbReference>
<dbReference type="Pfam" id="PF14527">
    <property type="entry name" value="LAGLIDADG_WhiA"/>
    <property type="match status" value="1"/>
</dbReference>
<dbReference type="Pfam" id="PF10298">
    <property type="entry name" value="WhiA_N"/>
    <property type="match status" value="1"/>
</dbReference>
<dbReference type="SUPFAM" id="SSF55608">
    <property type="entry name" value="Homing endonucleases"/>
    <property type="match status" value="1"/>
</dbReference>
<dbReference type="PROSITE" id="PS50819">
    <property type="entry name" value="INTEIN_ENDONUCLEASE"/>
    <property type="match status" value="1"/>
</dbReference>
<accession>Q890Y9</accession>